<reference key="1">
    <citation type="journal article" date="2003" name="J. Bacteriol.">
        <title>Comparative analyses of the complete genome sequences of Pierce's disease and citrus variegated chlorosis strains of Xylella fastidiosa.</title>
        <authorList>
            <person name="Van Sluys M.A."/>
            <person name="de Oliveira M.C."/>
            <person name="Monteiro-Vitorello C.B."/>
            <person name="Miyaki C.Y."/>
            <person name="Furlan L.R."/>
            <person name="Camargo L.E.A."/>
            <person name="da Silva A.C.R."/>
            <person name="Moon D.H."/>
            <person name="Takita M.A."/>
            <person name="Lemos E.G.M."/>
            <person name="Machado M.A."/>
            <person name="Ferro M.I.T."/>
            <person name="da Silva F.R."/>
            <person name="Goldman M.H.S."/>
            <person name="Goldman G.H."/>
            <person name="Lemos M.V.F."/>
            <person name="El-Dorry H."/>
            <person name="Tsai S.M."/>
            <person name="Carrer H."/>
            <person name="Carraro D.M."/>
            <person name="de Oliveira R.C."/>
            <person name="Nunes L.R."/>
            <person name="Siqueira W.J."/>
            <person name="Coutinho L.L."/>
            <person name="Kimura E.T."/>
            <person name="Ferro E.S."/>
            <person name="Harakava R."/>
            <person name="Kuramae E.E."/>
            <person name="Marino C.L."/>
            <person name="Giglioti E."/>
            <person name="Abreu I.L."/>
            <person name="Alves L.M.C."/>
            <person name="do Amaral A.M."/>
            <person name="Baia G.S."/>
            <person name="Blanco S.R."/>
            <person name="Brito M.S."/>
            <person name="Cannavan F.S."/>
            <person name="Celestino A.V."/>
            <person name="da Cunha A.F."/>
            <person name="Fenille R.C."/>
            <person name="Ferro J.A."/>
            <person name="Formighieri E.F."/>
            <person name="Kishi L.T."/>
            <person name="Leoni S.G."/>
            <person name="Oliveira A.R."/>
            <person name="Rosa V.E. Jr."/>
            <person name="Sassaki F.T."/>
            <person name="Sena J.A.D."/>
            <person name="de Souza A.A."/>
            <person name="Truffi D."/>
            <person name="Tsukumo F."/>
            <person name="Yanai G.M."/>
            <person name="Zaros L.G."/>
            <person name="Civerolo E.L."/>
            <person name="Simpson A.J.G."/>
            <person name="Almeida N.F. Jr."/>
            <person name="Setubal J.C."/>
            <person name="Kitajima J.P."/>
        </authorList>
    </citation>
    <scope>NUCLEOTIDE SEQUENCE [LARGE SCALE GENOMIC DNA]</scope>
    <source>
        <strain>Temecula1 / ATCC 700964</strain>
    </source>
</reference>
<name>COAX_XYLFT</name>
<evidence type="ECO:0000255" key="1">
    <source>
        <dbReference type="HAMAP-Rule" id="MF_01274"/>
    </source>
</evidence>
<dbReference type="EC" id="2.7.1.33" evidence="1"/>
<dbReference type="EMBL" id="AE009442">
    <property type="protein sequence ID" value="AAO28930.1"/>
    <property type="molecule type" value="Genomic_DNA"/>
</dbReference>
<dbReference type="RefSeq" id="WP_004089400.1">
    <property type="nucleotide sequence ID" value="NC_004556.1"/>
</dbReference>
<dbReference type="SMR" id="Q87CJ5"/>
<dbReference type="KEGG" id="xft:PD_1072"/>
<dbReference type="HOGENOM" id="CLU_066627_0_0_6"/>
<dbReference type="UniPathway" id="UPA00241">
    <property type="reaction ID" value="UER00352"/>
</dbReference>
<dbReference type="Proteomes" id="UP000002516">
    <property type="component" value="Chromosome"/>
</dbReference>
<dbReference type="GO" id="GO:0005737">
    <property type="term" value="C:cytoplasm"/>
    <property type="evidence" value="ECO:0007669"/>
    <property type="project" value="UniProtKB-SubCell"/>
</dbReference>
<dbReference type="GO" id="GO:0005524">
    <property type="term" value="F:ATP binding"/>
    <property type="evidence" value="ECO:0007669"/>
    <property type="project" value="UniProtKB-UniRule"/>
</dbReference>
<dbReference type="GO" id="GO:0004594">
    <property type="term" value="F:pantothenate kinase activity"/>
    <property type="evidence" value="ECO:0007669"/>
    <property type="project" value="UniProtKB-UniRule"/>
</dbReference>
<dbReference type="GO" id="GO:0015937">
    <property type="term" value="P:coenzyme A biosynthetic process"/>
    <property type="evidence" value="ECO:0007669"/>
    <property type="project" value="UniProtKB-UniRule"/>
</dbReference>
<dbReference type="CDD" id="cd24015">
    <property type="entry name" value="ASKHA_NBD_PanK-III"/>
    <property type="match status" value="1"/>
</dbReference>
<dbReference type="Gene3D" id="3.30.420.40">
    <property type="match status" value="2"/>
</dbReference>
<dbReference type="HAMAP" id="MF_01274">
    <property type="entry name" value="Pantothen_kinase_3"/>
    <property type="match status" value="1"/>
</dbReference>
<dbReference type="InterPro" id="IPR043129">
    <property type="entry name" value="ATPase_NBD"/>
</dbReference>
<dbReference type="InterPro" id="IPR004619">
    <property type="entry name" value="Type_III_PanK"/>
</dbReference>
<dbReference type="NCBIfam" id="TIGR00671">
    <property type="entry name" value="baf"/>
    <property type="match status" value="1"/>
</dbReference>
<dbReference type="NCBIfam" id="NF009864">
    <property type="entry name" value="PRK13327.1"/>
    <property type="match status" value="1"/>
</dbReference>
<dbReference type="PANTHER" id="PTHR34265">
    <property type="entry name" value="TYPE III PANTOTHENATE KINASE"/>
    <property type="match status" value="1"/>
</dbReference>
<dbReference type="PANTHER" id="PTHR34265:SF1">
    <property type="entry name" value="TYPE III PANTOTHENATE KINASE"/>
    <property type="match status" value="1"/>
</dbReference>
<dbReference type="Pfam" id="PF03309">
    <property type="entry name" value="Pan_kinase"/>
    <property type="match status" value="1"/>
</dbReference>
<dbReference type="SUPFAM" id="SSF53067">
    <property type="entry name" value="Actin-like ATPase domain"/>
    <property type="match status" value="2"/>
</dbReference>
<accession>Q87CJ5</accession>
<proteinExistence type="inferred from homology"/>
<protein>
    <recommendedName>
        <fullName evidence="1">Type III pantothenate kinase</fullName>
        <ecNumber evidence="1">2.7.1.33</ecNumber>
    </recommendedName>
    <alternativeName>
        <fullName evidence="1">PanK-III</fullName>
    </alternativeName>
    <alternativeName>
        <fullName evidence="1">Pantothenic acid kinase</fullName>
    </alternativeName>
</protein>
<sequence length="242" mass="25686">MNDWLFDLGNSRFKCASLREGVIGPVTVLPYLTETMDAFALQELPRGRVAYLASVAAPAITTHVLEVLKIHFEKVQVAATVAACAGVRIAYAHPERFGVDRFLALLGSYGEGNVLVVGVGTALTIDLLAANGCHLGGRISASPTLMRQALHARAEQLPLSGGNYLEFAEDTEDALVSGCNGAAVALIERSLYEAHQRLDQSVRLLLHGGGVASLLPWLGDVVHRPKLVLDGLAIWAAVAANV</sequence>
<keyword id="KW-0067">ATP-binding</keyword>
<keyword id="KW-0173">Coenzyme A biosynthesis</keyword>
<keyword id="KW-0963">Cytoplasm</keyword>
<keyword id="KW-0418">Kinase</keyword>
<keyword id="KW-0547">Nucleotide-binding</keyword>
<keyword id="KW-0630">Potassium</keyword>
<keyword id="KW-1185">Reference proteome</keyword>
<keyword id="KW-0808">Transferase</keyword>
<organism>
    <name type="scientific">Xylella fastidiosa (strain Temecula1 / ATCC 700964)</name>
    <dbReference type="NCBI Taxonomy" id="183190"/>
    <lineage>
        <taxon>Bacteria</taxon>
        <taxon>Pseudomonadati</taxon>
        <taxon>Pseudomonadota</taxon>
        <taxon>Gammaproteobacteria</taxon>
        <taxon>Lysobacterales</taxon>
        <taxon>Lysobacteraceae</taxon>
        <taxon>Xylella</taxon>
    </lineage>
</organism>
<gene>
    <name evidence="1" type="primary">coaX</name>
    <name type="ordered locus">PD_1072</name>
</gene>
<feature type="chain" id="PRO_0000270915" description="Type III pantothenate kinase">
    <location>
        <begin position="1"/>
        <end position="242"/>
    </location>
</feature>
<feature type="active site" description="Proton acceptor" evidence="1">
    <location>
        <position position="100"/>
    </location>
</feature>
<feature type="binding site" evidence="1">
    <location>
        <begin position="7"/>
        <end position="14"/>
    </location>
    <ligand>
        <name>ATP</name>
        <dbReference type="ChEBI" id="CHEBI:30616"/>
    </ligand>
</feature>
<feature type="binding site" evidence="1">
    <location>
        <position position="91"/>
    </location>
    <ligand>
        <name>substrate</name>
    </ligand>
</feature>
<feature type="binding site" evidence="1">
    <location>
        <begin position="98"/>
        <end position="101"/>
    </location>
    <ligand>
        <name>substrate</name>
    </ligand>
</feature>
<feature type="binding site" evidence="1">
    <location>
        <position position="121"/>
    </location>
    <ligand>
        <name>ATP</name>
        <dbReference type="ChEBI" id="CHEBI:30616"/>
    </ligand>
</feature>
<feature type="binding site" evidence="1">
    <location>
        <position position="171"/>
    </location>
    <ligand>
        <name>substrate</name>
    </ligand>
</feature>
<comment type="function">
    <text evidence="1">Catalyzes the phosphorylation of pantothenate (Pan), the first step in CoA biosynthesis.</text>
</comment>
<comment type="catalytic activity">
    <reaction evidence="1">
        <text>(R)-pantothenate + ATP = (R)-4'-phosphopantothenate + ADP + H(+)</text>
        <dbReference type="Rhea" id="RHEA:16373"/>
        <dbReference type="ChEBI" id="CHEBI:10986"/>
        <dbReference type="ChEBI" id="CHEBI:15378"/>
        <dbReference type="ChEBI" id="CHEBI:29032"/>
        <dbReference type="ChEBI" id="CHEBI:30616"/>
        <dbReference type="ChEBI" id="CHEBI:456216"/>
        <dbReference type="EC" id="2.7.1.33"/>
    </reaction>
</comment>
<comment type="cofactor">
    <cofactor evidence="1">
        <name>NH4(+)</name>
        <dbReference type="ChEBI" id="CHEBI:28938"/>
    </cofactor>
    <cofactor evidence="1">
        <name>K(+)</name>
        <dbReference type="ChEBI" id="CHEBI:29103"/>
    </cofactor>
    <text evidence="1">A monovalent cation. Ammonium or potassium.</text>
</comment>
<comment type="pathway">
    <text evidence="1">Cofactor biosynthesis; coenzyme A biosynthesis; CoA from (R)-pantothenate: step 1/5.</text>
</comment>
<comment type="subunit">
    <text evidence="1">Homodimer.</text>
</comment>
<comment type="subcellular location">
    <subcellularLocation>
        <location evidence="1">Cytoplasm</location>
    </subcellularLocation>
</comment>
<comment type="similarity">
    <text evidence="1">Belongs to the type III pantothenate kinase family.</text>
</comment>